<reference key="1">
    <citation type="journal article" date="1999" name="J. Biol. Chem.">
        <title>Characterization and cloning of celR, a transcriptional regulator of cellulase genes from Thermomonospora fusca.</title>
        <authorList>
            <person name="Spiridonov N.A."/>
            <person name="Wilson D.B."/>
        </authorList>
    </citation>
    <scope>NUCLEOTIDE SEQUENCE [GENOMIC DNA]</scope>
    <scope>FUNCTION</scope>
    <scope>DNA-BINDING</scope>
    <scope>ACTIVITY REGULATION</scope>
    <source>
        <strain>YX / ER1</strain>
    </source>
</reference>
<reference key="2">
    <citation type="journal article" date="2000" name="J. Bacteriol.">
        <title>A celR mutation affecting transcription of cellulase genes in Thermobifida fusca.</title>
        <authorList>
            <person name="Spiridonov N.A."/>
            <person name="Wilson D.B."/>
        </authorList>
    </citation>
    <scope>FUNCTION</scope>
    <scope>DNA-BINDING</scope>
    <scope>ACTIVITY REGULATION</scope>
    <scope>SUBCELLULAR LOCATION</scope>
    <scope>INDUCTION</scope>
    <scope>MUTAGENESIS OF ALA-55</scope>
    <source>
        <strain>YX</strain>
        <strain>YX / ER1</strain>
    </source>
</reference>
<name>CELR_THEFU</name>
<evidence type="ECO:0000255" key="1">
    <source>
        <dbReference type="PROSITE-ProRule" id="PRU00111"/>
    </source>
</evidence>
<evidence type="ECO:0000269" key="2">
    <source>
    </source>
</evidence>
<evidence type="ECO:0000269" key="3">
    <source>
    </source>
</evidence>
<evidence type="ECO:0000303" key="4">
    <source>
    </source>
</evidence>
<evidence type="ECO:0000305" key="5"/>
<gene>
    <name evidence="4" type="primary">celR</name>
</gene>
<keyword id="KW-0963">Cytoplasm</keyword>
<keyword id="KW-0238">DNA-binding</keyword>
<keyword id="KW-0678">Repressor</keyword>
<keyword id="KW-0804">Transcription</keyword>
<keyword id="KW-0805">Transcription regulation</keyword>
<accession>O87590</accession>
<proteinExistence type="evidence at protein level"/>
<organism>
    <name type="scientific">Thermobifida fusca</name>
    <name type="common">Thermomonospora fusca</name>
    <dbReference type="NCBI Taxonomy" id="2021"/>
    <lineage>
        <taxon>Bacteria</taxon>
        <taxon>Bacillati</taxon>
        <taxon>Actinomycetota</taxon>
        <taxon>Actinomycetes</taxon>
        <taxon>Streptosporangiales</taxon>
        <taxon>Nocardiopsidaceae</taxon>
        <taxon>Thermobifida</taxon>
    </lineage>
</organism>
<feature type="chain" id="PRO_0000107937" description="HTH-type transcriptional regulator CelR">
    <location>
        <begin position="1"/>
        <end position="340"/>
    </location>
</feature>
<feature type="domain" description="HTH lacI-type" evidence="1">
    <location>
        <begin position="1"/>
        <end position="61"/>
    </location>
</feature>
<feature type="DNA-binding region" description="H-T-H motif" evidence="1">
    <location>
        <begin position="9"/>
        <end position="28"/>
    </location>
</feature>
<feature type="mutagenesis site" description="Decreases binding to DNA and forms a less stable complex with the celE promoter in the presence of cellobiose." evidence="3">
    <original>A</original>
    <variation>T</variation>
    <location>
        <position position="55"/>
    </location>
</feature>
<comment type="function">
    <text evidence="2 3">Transcriptional regulator that regulates the expression of all six cellulases, encoded by the cel genes (designated celA through celF) (PubMed:10224066). Acts as a repressor (PubMed:10613893). Specifically binds to a 14-bp inverted repeat site, which is present in the upstream region of the cellulase genes (PubMed:10224066).</text>
</comment>
<comment type="activity regulation">
    <text evidence="2 3">Activity is controlled by cytoplasmic cellobiose levels (PubMed:10224066, PubMed:10613893). Binding of CelR to the celE promoter is inhibited specifically by low concentrations of cellobiose, the major end product of cellulases (PubMed:10224066, PubMed:10613893). Activity may also be regulated through post-translational modification (PubMed:10613893).</text>
</comment>
<comment type="subcellular location">
    <subcellularLocation>
        <location evidence="3">Cytoplasm</location>
    </subcellularLocation>
</comment>
<comment type="induction">
    <text evidence="3">Constitutively expressed.</text>
</comment>
<dbReference type="EMBL" id="AF086819">
    <property type="protein sequence ID" value="AAC42987.1"/>
    <property type="molecule type" value="Genomic_DNA"/>
</dbReference>
<dbReference type="RefSeq" id="WP_011291385.1">
    <property type="nucleotide sequence ID" value="NZ_ONLN01000144.1"/>
</dbReference>
<dbReference type="SMR" id="O87590"/>
<dbReference type="OMA" id="VMTEPDW"/>
<dbReference type="GO" id="GO:0005737">
    <property type="term" value="C:cytoplasm"/>
    <property type="evidence" value="ECO:0007669"/>
    <property type="project" value="UniProtKB-SubCell"/>
</dbReference>
<dbReference type="GO" id="GO:0003700">
    <property type="term" value="F:DNA-binding transcription factor activity"/>
    <property type="evidence" value="ECO:0007669"/>
    <property type="project" value="TreeGrafter"/>
</dbReference>
<dbReference type="GO" id="GO:0000976">
    <property type="term" value="F:transcription cis-regulatory region binding"/>
    <property type="evidence" value="ECO:0007669"/>
    <property type="project" value="TreeGrafter"/>
</dbReference>
<dbReference type="CDD" id="cd01392">
    <property type="entry name" value="HTH_LacI"/>
    <property type="match status" value="1"/>
</dbReference>
<dbReference type="CDD" id="cd06267">
    <property type="entry name" value="PBP1_LacI_sugar_binding-like"/>
    <property type="match status" value="1"/>
</dbReference>
<dbReference type="Gene3D" id="3.40.50.2300">
    <property type="match status" value="2"/>
</dbReference>
<dbReference type="Gene3D" id="1.10.260.40">
    <property type="entry name" value="lambda repressor-like DNA-binding domains"/>
    <property type="match status" value="1"/>
</dbReference>
<dbReference type="InterPro" id="IPR000843">
    <property type="entry name" value="HTH_LacI"/>
</dbReference>
<dbReference type="InterPro" id="IPR046335">
    <property type="entry name" value="LacI/GalR-like_sensor"/>
</dbReference>
<dbReference type="InterPro" id="IPR010982">
    <property type="entry name" value="Lambda_DNA-bd_dom_sf"/>
</dbReference>
<dbReference type="InterPro" id="IPR028082">
    <property type="entry name" value="Peripla_BP_I"/>
</dbReference>
<dbReference type="PANTHER" id="PTHR30146:SF109">
    <property type="entry name" value="HTH-TYPE TRANSCRIPTIONAL REGULATOR GALS"/>
    <property type="match status" value="1"/>
</dbReference>
<dbReference type="PANTHER" id="PTHR30146">
    <property type="entry name" value="LACI-RELATED TRANSCRIPTIONAL REPRESSOR"/>
    <property type="match status" value="1"/>
</dbReference>
<dbReference type="Pfam" id="PF00356">
    <property type="entry name" value="LacI"/>
    <property type="match status" value="1"/>
</dbReference>
<dbReference type="Pfam" id="PF13377">
    <property type="entry name" value="Peripla_BP_3"/>
    <property type="match status" value="1"/>
</dbReference>
<dbReference type="SMART" id="SM00354">
    <property type="entry name" value="HTH_LACI"/>
    <property type="match status" value="1"/>
</dbReference>
<dbReference type="SUPFAM" id="SSF47413">
    <property type="entry name" value="lambda repressor-like DNA-binding domains"/>
    <property type="match status" value="1"/>
</dbReference>
<dbReference type="SUPFAM" id="SSF53822">
    <property type="entry name" value="Periplasmic binding protein-like I"/>
    <property type="match status" value="1"/>
</dbReference>
<dbReference type="PROSITE" id="PS50932">
    <property type="entry name" value="HTH_LACI_2"/>
    <property type="match status" value="1"/>
</dbReference>
<sequence length="340" mass="36864">MERRRRPTLEMVAALAGVGRGTVSRVINGSDQVSPATREAVKRAIKELGYVPNRAARTLVTRRTDTVALVVSENNQKLFAEPFYAGIVLGVGVALSERGFQFVLATGRSGIEHERLGGYLAGQHVDGVLLLSLHRDDPLPQMLDEAGVPYVYGGRPLGVPEEQVSYVDIDNIGGGRQATQRLIETGHRRIATIAGPQDMVAGVERLQGYREALLAAGMEYDETLVSYGDFTYDSGVAAMRELLDRAPDVDAVFAASDLMGLAALRVLRASGRRVPEDVAVVGYDDSTVAEHAEPPMTSVNQPTELMGREMARLLVDRITGETTEPVRLVLETHLMVRESG</sequence>
<protein>
    <recommendedName>
        <fullName evidence="5">HTH-type transcriptional regulator CelR</fullName>
    </recommendedName>
</protein>